<dbReference type="EMBL" id="CP017625">
    <property type="protein sequence ID" value="AOW28537.1"/>
    <property type="molecule type" value="Genomic_DNA"/>
</dbReference>
<dbReference type="RefSeq" id="XP_723209.2">
    <property type="nucleotide sequence ID" value="XM_718116.2"/>
</dbReference>
<dbReference type="PDB" id="9IUK">
    <property type="method" value="EM"/>
    <property type="resolution" value="3.38 A"/>
    <property type="chains" value="A=1-1501"/>
</dbReference>
<dbReference type="PDB" id="9IUL">
    <property type="method" value="EM"/>
    <property type="resolution" value="3.30 A"/>
    <property type="chains" value="A=1-1501"/>
</dbReference>
<dbReference type="PDB" id="9IUM">
    <property type="method" value="EM"/>
    <property type="resolution" value="3.08 A"/>
    <property type="chains" value="A=1-1501"/>
</dbReference>
<dbReference type="PDBsum" id="9IUK"/>
<dbReference type="PDBsum" id="9IUL"/>
<dbReference type="PDBsum" id="9IUM"/>
<dbReference type="EMDB" id="EMD-60908"/>
<dbReference type="EMDB" id="EMD-60909"/>
<dbReference type="EMDB" id="EMD-60910"/>
<dbReference type="SMR" id="Q5ANA3"/>
<dbReference type="FunCoup" id="Q5ANA3">
    <property type="interactions" value="412"/>
</dbReference>
<dbReference type="STRING" id="237561.Q5ANA3"/>
<dbReference type="EnsemblFungi" id="C3_05220W_A-T">
    <property type="protein sequence ID" value="C3_05220W_A-T-p1"/>
    <property type="gene ID" value="C3_05220W_A"/>
</dbReference>
<dbReference type="GeneID" id="3635237"/>
<dbReference type="KEGG" id="cal:CAALFM_C305220WA"/>
<dbReference type="CGD" id="CAL0000186516">
    <property type="gene designation" value="CDR1"/>
</dbReference>
<dbReference type="VEuPathDB" id="FungiDB:C3_05220W_A"/>
<dbReference type="eggNOG" id="KOG0065">
    <property type="taxonomic scope" value="Eukaryota"/>
</dbReference>
<dbReference type="HOGENOM" id="CLU_000604_35_0_1"/>
<dbReference type="InParanoid" id="Q5ANA3"/>
<dbReference type="OrthoDB" id="245989at2759"/>
<dbReference type="SABIO-RK" id="Q5ANA3"/>
<dbReference type="PRO" id="PR:Q5ANA3"/>
<dbReference type="Proteomes" id="UP000000559">
    <property type="component" value="Chromosome 3"/>
</dbReference>
<dbReference type="GO" id="GO:0009986">
    <property type="term" value="C:cell surface"/>
    <property type="evidence" value="ECO:0000314"/>
    <property type="project" value="CGD"/>
</dbReference>
<dbReference type="GO" id="GO:1903561">
    <property type="term" value="C:extracellular vesicle"/>
    <property type="evidence" value="ECO:0000314"/>
    <property type="project" value="CGD"/>
</dbReference>
<dbReference type="GO" id="GO:0016020">
    <property type="term" value="C:membrane"/>
    <property type="evidence" value="ECO:0000314"/>
    <property type="project" value="CGD"/>
</dbReference>
<dbReference type="GO" id="GO:0005886">
    <property type="term" value="C:plasma membrane"/>
    <property type="evidence" value="ECO:0000314"/>
    <property type="project" value="CGD"/>
</dbReference>
<dbReference type="GO" id="GO:0140359">
    <property type="term" value="F:ABC-type transporter activity"/>
    <property type="evidence" value="ECO:0007669"/>
    <property type="project" value="InterPro"/>
</dbReference>
<dbReference type="GO" id="GO:0015247">
    <property type="term" value="F:aminophospholipid flippase activity"/>
    <property type="evidence" value="ECO:0000314"/>
    <property type="project" value="CGD"/>
</dbReference>
<dbReference type="GO" id="GO:0005524">
    <property type="term" value="F:ATP binding"/>
    <property type="evidence" value="ECO:0000314"/>
    <property type="project" value="CGD"/>
</dbReference>
<dbReference type="GO" id="GO:0016887">
    <property type="term" value="F:ATP hydrolysis activity"/>
    <property type="evidence" value="ECO:0000314"/>
    <property type="project" value="CGD"/>
</dbReference>
<dbReference type="GO" id="GO:1901474">
    <property type="term" value="F:azole transmembrane transporter activity"/>
    <property type="evidence" value="ECO:0000314"/>
    <property type="project" value="CGD"/>
</dbReference>
<dbReference type="GO" id="GO:1903875">
    <property type="term" value="F:corticosterone binding"/>
    <property type="evidence" value="ECO:0000314"/>
    <property type="project" value="CGD"/>
</dbReference>
<dbReference type="GO" id="GO:1903924">
    <property type="term" value="F:estradiol binding"/>
    <property type="evidence" value="ECO:0000314"/>
    <property type="project" value="CGD"/>
</dbReference>
<dbReference type="GO" id="GO:0015244">
    <property type="term" value="F:fluconazole transmembrane transporter activity"/>
    <property type="evidence" value="ECO:0000314"/>
    <property type="project" value="CGD"/>
</dbReference>
<dbReference type="GO" id="GO:0000166">
    <property type="term" value="F:nucleotide binding"/>
    <property type="evidence" value="ECO:0000314"/>
    <property type="project" value="CGD"/>
</dbReference>
<dbReference type="GO" id="GO:0090554">
    <property type="term" value="F:phosphatidylcholine floppase activity"/>
    <property type="evidence" value="ECO:0000316"/>
    <property type="project" value="CGD"/>
</dbReference>
<dbReference type="GO" id="GO:0140341">
    <property type="term" value="F:phosphatidylethanolamine floppase activity"/>
    <property type="evidence" value="ECO:0000314"/>
    <property type="project" value="CGD"/>
</dbReference>
<dbReference type="GO" id="GO:0090556">
    <property type="term" value="F:phosphatidylserine floppase activity"/>
    <property type="evidence" value="ECO:0000316"/>
    <property type="project" value="CGD"/>
</dbReference>
<dbReference type="GO" id="GO:0017111">
    <property type="term" value="F:ribonucleoside triphosphate phosphatase activity"/>
    <property type="evidence" value="ECO:0000314"/>
    <property type="project" value="CGD"/>
</dbReference>
<dbReference type="GO" id="GO:0042910">
    <property type="term" value="F:xenobiotic transmembrane transporter activity"/>
    <property type="evidence" value="ECO:0000315"/>
    <property type="project" value="CGD"/>
</dbReference>
<dbReference type="GO" id="GO:0045117">
    <property type="term" value="P:azole transmembrane transport"/>
    <property type="evidence" value="ECO:0000314"/>
    <property type="project" value="CGD"/>
</dbReference>
<dbReference type="GO" id="GO:0015903">
    <property type="term" value="P:fluconazole transport"/>
    <property type="evidence" value="ECO:0000314"/>
    <property type="project" value="CGD"/>
</dbReference>
<dbReference type="GO" id="GO:0045332">
    <property type="term" value="P:phospholipid translocation"/>
    <property type="evidence" value="ECO:0000314"/>
    <property type="project" value="CGD"/>
</dbReference>
<dbReference type="GO" id="GO:0046677">
    <property type="term" value="P:response to antibiotic"/>
    <property type="evidence" value="ECO:0007669"/>
    <property type="project" value="UniProtKB-KW"/>
</dbReference>
<dbReference type="GO" id="GO:0046898">
    <property type="term" value="P:response to cycloheximide"/>
    <property type="evidence" value="ECO:0007669"/>
    <property type="project" value="UniProtKB-KW"/>
</dbReference>
<dbReference type="GO" id="GO:1990961">
    <property type="term" value="P:xenobiotic detoxification by transmembrane export across the plasma membrane"/>
    <property type="evidence" value="ECO:0000314"/>
    <property type="project" value="CGD"/>
</dbReference>
<dbReference type="CDD" id="cd03233">
    <property type="entry name" value="ABCG_PDR_domain1"/>
    <property type="match status" value="1"/>
</dbReference>
<dbReference type="CDD" id="cd03232">
    <property type="entry name" value="ABCG_PDR_domain2"/>
    <property type="match status" value="1"/>
</dbReference>
<dbReference type="FunFam" id="3.40.50.300:FF:000054">
    <property type="entry name" value="ABC multidrug transporter atrF"/>
    <property type="match status" value="1"/>
</dbReference>
<dbReference type="FunFam" id="3.40.50.300:FF:001262">
    <property type="entry name" value="ABC transporter CDR4"/>
    <property type="match status" value="1"/>
</dbReference>
<dbReference type="Gene3D" id="3.40.50.300">
    <property type="entry name" value="P-loop containing nucleotide triphosphate hydrolases"/>
    <property type="match status" value="2"/>
</dbReference>
<dbReference type="InterPro" id="IPR003593">
    <property type="entry name" value="AAA+_ATPase"/>
</dbReference>
<dbReference type="InterPro" id="IPR013525">
    <property type="entry name" value="ABC2_TM"/>
</dbReference>
<dbReference type="InterPro" id="IPR029481">
    <property type="entry name" value="ABC_trans_N"/>
</dbReference>
<dbReference type="InterPro" id="IPR003439">
    <property type="entry name" value="ABC_transporter-like_ATP-bd"/>
</dbReference>
<dbReference type="InterPro" id="IPR017871">
    <property type="entry name" value="ABC_transporter-like_CS"/>
</dbReference>
<dbReference type="InterPro" id="IPR034001">
    <property type="entry name" value="ABCG_PDR_1"/>
</dbReference>
<dbReference type="InterPro" id="IPR034003">
    <property type="entry name" value="ABCG_PDR_2"/>
</dbReference>
<dbReference type="InterPro" id="IPR005285">
    <property type="entry name" value="Drug-R_PDR/CDR"/>
</dbReference>
<dbReference type="InterPro" id="IPR027417">
    <property type="entry name" value="P-loop_NTPase"/>
</dbReference>
<dbReference type="InterPro" id="IPR010929">
    <property type="entry name" value="PDR_CDR_ABC"/>
</dbReference>
<dbReference type="NCBIfam" id="TIGR00956">
    <property type="entry name" value="3a01205"/>
    <property type="match status" value="1"/>
</dbReference>
<dbReference type="PANTHER" id="PTHR19241">
    <property type="entry name" value="ATP-BINDING CASSETTE TRANSPORTER"/>
    <property type="match status" value="1"/>
</dbReference>
<dbReference type="Pfam" id="PF01061">
    <property type="entry name" value="ABC2_membrane"/>
    <property type="match status" value="2"/>
</dbReference>
<dbReference type="Pfam" id="PF00005">
    <property type="entry name" value="ABC_tran"/>
    <property type="match status" value="2"/>
</dbReference>
<dbReference type="Pfam" id="PF14510">
    <property type="entry name" value="ABC_trans_N"/>
    <property type="match status" value="1"/>
</dbReference>
<dbReference type="Pfam" id="PF06422">
    <property type="entry name" value="PDR_CDR"/>
    <property type="match status" value="1"/>
</dbReference>
<dbReference type="SMART" id="SM00382">
    <property type="entry name" value="AAA"/>
    <property type="match status" value="2"/>
</dbReference>
<dbReference type="SUPFAM" id="SSF52540">
    <property type="entry name" value="P-loop containing nucleoside triphosphate hydrolases"/>
    <property type="match status" value="2"/>
</dbReference>
<dbReference type="PROSITE" id="PS00211">
    <property type="entry name" value="ABC_TRANSPORTER_1"/>
    <property type="match status" value="1"/>
</dbReference>
<dbReference type="PROSITE" id="PS50893">
    <property type="entry name" value="ABC_TRANSPORTER_2"/>
    <property type="match status" value="2"/>
</dbReference>
<sequence>MSDSKMSSQDESKLEKAISQDSSSENHSINEYHGFDAHTSENIQNLARTFTHDSFKDDSSAGLLKYLTHMSEVPGVNPYEHEEINNDQLNPDSENFNAKFWVKNLRKLFESDPEYYKPSKLGIGYRNLRAYGVANDSDYQPTVTNALWKLATEGFRHFQKDDDSRYFDILKSMDAIMRPGELTVVLGRPGAGCSTLLKTIAVNTYGFHIGKESQITYDGLSPHDIERHYRGDVIYSAETDVHFPHLSVGDTLEFAARLRTPQNRGEGIDRETYAKHMASVYMATYGLSHTRNTNVGNDFVRGVSGGERKRVSIAEASLSGANIQCWDNATRGLDSATALEFIRALKTSAVILDTTPLIAIYQCSQDAYDLFDKVVVLYEGYQIFFGKATKAKEYFEKMGWKCPQRQTTADFLTSLTNPAEREPLPGYEDKVPRTAQEFETYWKNSPEYAELTKEIDEYFVECERSNTRETYRESHVAKQSNNTRPASPYTVSFFMQVRYGVARNFLRMKGDPSIPIFSVFGQLVMGLILSSVFYNLSQTTGSFYYRGAAMFFAVLFNAFSSLLEIMSLFEARPIVEKHKKYALYRPSADALASIISELPVKLAMSMSFNFVFYFMVNFRRNPGRFFFYWLMCIWCTFVMSHLFRSIGAVSTSISGAMTPATVLLLAMVIYTGFVIPTPSMLGWSRWINYINPVGYVFESLMVNEFHGREFQCAQYVPSGPGYENISRSNQVCTAVGSVPGNEMVSGTNYLAGAYQYYNSHKWRNLGITIGFAVFFLAIYIALTEFNKGAMQKGEIVLFLKGSLKKHKRKTAASNKGDIEAGPVAGKLDYQDEAEAVNNEKFTEKGSTGSVDFPENREIFFWRDLTYQVKIKKEDRVILDHVDGWVKPGQITALMGASGAGKTTLLNCLSERVTTGIITDGERLVNGHALDSSFQRSIGYVQQQDVHLETTTVREALQFSAYLRQSNKISKKEKDDYVDYVIDLLEMTDYADALVGVAGEGLNVEQRKRLTIGVELVAKPKLLLFLDEPTSGLDSQTAWSICKLMRKLADHGQAILCTIHQPSALIMAEFDRLLFLQKGGRTAYFGELGENCQTMINYFEKYGADPCPKEANPAEWMLQVVGAAPGSHAKQDYFEVWRNSSEYQAVREEINRMEAELSKLPRDNDPEALLKYAAPLWKQYLLVSWRTIVQDWRSPGYIYSKIFLVVSAALFNGFSFFKAKNNMQGLQNQMFSVFMFFIPFNTLVQQMLPYFVKQRDVYEVREAPSRTFSWFAFIAGQITSEIPYQVAVGTIAFFCWYYPLGLYNNATPTDSVNPRGVLMWMLVTAFYVYTATMGQLCMSFSELADNAANLATLLFTMCLNFCGVLAGPDVLPGFWIFMYRCNPFTYLVQAMLSTGLANTFVKCAEREYVSVKPPNGESCSTYLDPYIKFAGGYFETRNDGSCAFCQMSSTNTFLKSVNSLYSERWRNFGIFIAFIAINIILTVIFYWLARVPKGNREKKNKK</sequence>
<keyword id="KW-0002">3D-structure</keyword>
<keyword id="KW-0046">Antibiotic resistance</keyword>
<keyword id="KW-0067">ATP-binding</keyword>
<keyword id="KW-1003">Cell membrane</keyword>
<keyword id="KW-0175">Coiled coil</keyword>
<keyword id="KW-0196">Cycloheximide resistance</keyword>
<keyword id="KW-0472">Membrane</keyword>
<keyword id="KW-0547">Nucleotide-binding</keyword>
<keyword id="KW-1185">Reference proteome</keyword>
<keyword id="KW-0677">Repeat</keyword>
<keyword id="KW-0812">Transmembrane</keyword>
<keyword id="KW-1133">Transmembrane helix</keyword>
<keyword id="KW-0813">Transport</keyword>
<reference key="1">
    <citation type="journal article" date="2004" name="Proc. Natl. Acad. Sci. U.S.A.">
        <title>The diploid genome sequence of Candida albicans.</title>
        <authorList>
            <person name="Jones T."/>
            <person name="Federspiel N.A."/>
            <person name="Chibana H."/>
            <person name="Dungan J."/>
            <person name="Kalman S."/>
            <person name="Magee B.B."/>
            <person name="Newport G."/>
            <person name="Thorstenson Y.R."/>
            <person name="Agabian N."/>
            <person name="Magee P.T."/>
            <person name="Davis R.W."/>
            <person name="Scherer S."/>
        </authorList>
    </citation>
    <scope>NUCLEOTIDE SEQUENCE [LARGE SCALE GENOMIC DNA]</scope>
    <source>
        <strain>SC5314 / ATCC MYA-2876</strain>
    </source>
</reference>
<reference key="2">
    <citation type="journal article" date="2007" name="Genome Biol.">
        <title>Assembly of the Candida albicans genome into sixteen supercontigs aligned on the eight chromosomes.</title>
        <authorList>
            <person name="van het Hoog M."/>
            <person name="Rast T.J."/>
            <person name="Martchenko M."/>
            <person name="Grindle S."/>
            <person name="Dignard D."/>
            <person name="Hogues H."/>
            <person name="Cuomo C."/>
            <person name="Berriman M."/>
            <person name="Scherer S."/>
            <person name="Magee B.B."/>
            <person name="Whiteway M."/>
            <person name="Chibana H."/>
            <person name="Nantel A."/>
            <person name="Magee P.T."/>
        </authorList>
    </citation>
    <scope>GENOME REANNOTATION</scope>
    <source>
        <strain>SC5314 / ATCC MYA-2876</strain>
    </source>
</reference>
<reference key="3">
    <citation type="journal article" date="2013" name="Genome Biol.">
        <title>Assembly of a phased diploid Candida albicans genome facilitates allele-specific measurements and provides a simple model for repeat and indel structure.</title>
        <authorList>
            <person name="Muzzey D."/>
            <person name="Schwartz K."/>
            <person name="Weissman J.S."/>
            <person name="Sherlock G."/>
        </authorList>
    </citation>
    <scope>NUCLEOTIDE SEQUENCE [LARGE SCALE GENOMIC DNA]</scope>
    <scope>GENOME REANNOTATION</scope>
    <source>
        <strain>SC5314 / ATCC MYA-2876</strain>
    </source>
</reference>
<reference key="4">
    <citation type="journal article" date="1996" name="Antimicrob. Agents Chemother.">
        <title>Susceptibilities of Candida albicans multidrug transporter mutants to various antifungal agents and other metabolic inhibitors.</title>
        <authorList>
            <person name="Sanglard D."/>
            <person name="Ischer F."/>
            <person name="Monod M."/>
            <person name="Bille J."/>
        </authorList>
    </citation>
    <scope>DISRUPTION PHENOTYPE</scope>
    <scope>FUNCTION</scope>
</reference>
<reference key="5">
    <citation type="journal article" date="1996" name="Antimicrob. Agents Chemother.">
        <title>Multiple efflux mechanisms are involved in Candida albicans fluconazole resistance.</title>
        <authorList>
            <person name="Albertson G.D."/>
            <person name="Niimi M."/>
            <person name="Cannon R.D."/>
            <person name="Jenkinson H.F."/>
        </authorList>
    </citation>
    <scope>FUNCTION</scope>
</reference>
<reference key="6">
    <citation type="journal article" date="1998" name="FEMS Microbiol. Lett.">
        <title>Characterisation of human steroid hormone transport mediated by Cdr1p, a multidrug transporter of Candida albicans, belonging to the ATP binding cassette super family.</title>
        <authorList>
            <person name="Krishnamurthy S."/>
            <person name="Gupta V."/>
            <person name="Snehlata P."/>
            <person name="Prasad R."/>
        </authorList>
    </citation>
    <scope>FUNCTION</scope>
</reference>
<reference key="7">
    <citation type="journal article" date="1998" name="FEMS Microbiol. Lett.">
        <title>Expression of CDR1, a multidrug resistance gene of Candida albicans: transcriptional activation by heat shock, drugs and human steroid hormones.</title>
        <authorList>
            <person name="Krishnamurthy S."/>
            <person name="Gupta V."/>
            <person name="Prasad R."/>
            <person name="Panwar S.L."/>
            <person name="Prasad R."/>
        </authorList>
    </citation>
    <scope>INDUCTION</scope>
</reference>
<reference key="8">
    <citation type="journal article" date="1998" name="Yeast">
        <title>Induced expression of the Candida albicans multidrug resistance gene CDR1 in response to fluconazole and other antifungals.</title>
        <authorList>
            <person name="Hernaez M.L."/>
            <person name="Gil C."/>
            <person name="Pla J."/>
            <person name="Nombela C."/>
        </authorList>
    </citation>
    <scope>INDUCTION</scope>
</reference>
<reference key="9">
    <citation type="journal article" date="1998" name="Yeast">
        <title>Deletion of transmembrane domain 12 of CDR1, a multidrug transporter from Candida albicans, leads to altered drug specificity: expression of a yeast multidrug transporter in baculovirus expression system.</title>
        <authorList>
            <person name="Krishnamurthy S."/>
            <person name="Chatterjee U."/>
            <person name="Gupta V."/>
            <person name="Prasad R."/>
            <person name="Das P."/>
            <person name="Snehlata P."/>
            <person name="Hasnain S.E."/>
            <person name="Prasad R."/>
        </authorList>
    </citation>
    <scope>FUNCTION</scope>
</reference>
<reference key="10">
    <citation type="journal article" date="1999" name="Antimicrob. Agents Chemother.">
        <title>Antagonism of azole activity against Candida albicans following induction of multidrug resistance genes by selected antimicrobial agents.</title>
        <authorList>
            <person name="Henry K.W."/>
            <person name="Cruz M.C."/>
            <person name="Katiyar S.K."/>
            <person name="Edlind T.D."/>
        </authorList>
    </citation>
    <scope>FUNCTION</scope>
    <scope>INDUCTION</scope>
</reference>
<reference key="11">
    <citation type="journal article" date="1999" name="FEMS Microbiol. Lett.">
        <title>Membrane fluidity affects functions of Cdr1p, a multidrug ABC transporter of Candida albicans.</title>
        <authorList>
            <person name="Smriti X."/>
            <person name="Krishnamurthy S.S."/>
            <person name="Prasad R."/>
        </authorList>
    </citation>
    <scope>FUNCTION</scope>
</reference>
<reference key="12">
    <citation type="journal article" date="1999" name="FEMS Microbiol. Lett.">
        <title>CDR1, a multidrug resistance gene from Candida albicans, contains multiple regulatory domains in its promoter and the distal AP-1 element mediates its induction by miconazole.</title>
        <authorList>
            <person name="Puri N."/>
            <person name="Krishnamurthy S."/>
            <person name="Habib S."/>
            <person name="Hasnain S.E."/>
            <person name="Goswami S.K."/>
            <person name="Prasad R."/>
        </authorList>
    </citation>
    <scope>INDUCTION</scope>
</reference>
<reference key="13">
    <citation type="journal article" date="1999" name="Yeast">
        <title>Asymmetric distribution of phosphatidylethanolamine in C. albicans: possible mediation by CDR1, a multidrug transporter belonging to ATP binding cassette (ABC) superfamily.</title>
        <authorList>
            <person name="Dogra S."/>
            <person name="Krishnamurthy S."/>
            <person name="Gupta V."/>
            <person name="Dixit B.L."/>
            <person name="Gupta C.M."/>
            <person name="Sanglard D."/>
            <person name="Prasad R."/>
        </authorList>
    </citation>
    <scope>FUNCTION</scope>
</reference>
<reference key="14">
    <citation type="journal article" date="2000" name="Antimicrob. Agents Chemother.">
        <title>Transcriptional analyses of antifungal drug resistance in Candida albicans.</title>
        <authorList>
            <person name="Lyons C.N."/>
            <person name="White T.C."/>
        </authorList>
    </citation>
    <scope>INDUCTION</scope>
</reference>
<reference key="15">
    <citation type="journal article" date="2001" name="Antimicrob. Agents Chemother.">
        <title>Functional expression of Candida albicans drug efflux pump Cdr1p in a Saccharomyces cerevisiae strain deficient in membrane transporters.</title>
        <authorList>
            <person name="Nakamura K."/>
            <person name="Niimi M."/>
            <person name="Niimi K."/>
            <person name="Holmes A.R."/>
            <person name="Yates J.E."/>
            <person name="Decottignies A."/>
            <person name="Monk B.C."/>
            <person name="Goffeau A."/>
            <person name="Cannon R.D."/>
        </authorList>
    </citation>
    <scope>FUNCTION</scope>
</reference>
<reference key="16">
    <citation type="journal article" date="2002" name="Mol. Microbiol.">
        <title>A common drug-responsive element mediates the upregulation of the Candida albicans ABC transporters CDR1 and CDR2, two genes involved in antifungal drug resistance.</title>
        <authorList>
            <person name="de Micheli M."/>
            <person name="Bille J."/>
            <person name="Schueller C."/>
            <person name="Sanglard D."/>
        </authorList>
    </citation>
    <scope>INDUCTION</scope>
</reference>
<reference key="17">
    <citation type="journal article" date="2002" name="Yeast">
        <title>ABC transporters Cdr1p, Cdr2p and Cdr3p of a human pathogen Candida albicans are general phospholipid translocators.</title>
        <authorList>
            <person name="Smriti X."/>
            <person name="Krishnamurthy S."/>
            <person name="Dixit B.L."/>
            <person name="Gupta C.M."/>
            <person name="Milewski S."/>
            <person name="Prasad R."/>
        </authorList>
    </citation>
    <scope>FUNCTION</scope>
</reference>
<reference key="18">
    <citation type="journal article" date="2003" name="Antimicrob. Agents Chemother.">
        <title>Functional similarities and differences between Candida albicans Cdr1p and Cdr2p transporters.</title>
        <authorList>
            <person name="Gauthier C."/>
            <person name="Weber S."/>
            <person name="Alarco A.M."/>
            <person name="Alqawi O."/>
            <person name="Daoud R."/>
            <person name="Georges E."/>
            <person name="Raymond M."/>
        </authorList>
    </citation>
    <scope>FUNCTION</scope>
</reference>
<reference key="19">
    <citation type="journal article" date="2004" name="Antimicrob. Agents Chemother.">
        <title>CaNdt80 is involved in drug resistance in Candida albicans by regulating CDR1.</title>
        <authorList>
            <person name="Chen C.G."/>
            <person name="Yang Y.L."/>
            <person name="Shih H.I."/>
            <person name="Su C.L."/>
            <person name="Lo H.J."/>
        </authorList>
    </citation>
    <scope>INDUCTION</scope>
</reference>
<reference key="20">
    <citation type="journal article" date="2003" name="Biochemistry">
        <title>Purification and characterization of the N-terminal nucleotide binding domain of an ABC drug transporter of Candida albicans: uncommon cysteine 193 of Walker A is critical for ATP hydrolysis.</title>
        <authorList>
            <person name="Jha S."/>
            <person name="Karnani N."/>
            <person name="Dhar S.K."/>
            <person name="Mukhopadhayay K."/>
            <person name="Shukla S."/>
            <person name="Saini P."/>
            <person name="Mukhopadhayay G."/>
            <person name="Prasad R."/>
        </authorList>
    </citation>
    <scope>DOMAIN</scope>
    <scope>MUTAGENESIS OF CYS-193</scope>
</reference>
<reference key="21">
    <citation type="journal article" date="2003" name="Eukaryot. Cell">
        <title>Functional characterization of Candida albicans ABC transporter Cdr1p.</title>
        <authorList>
            <person name="Shukla S."/>
            <person name="Saini P."/>
            <person name="Smriti X."/>
            <person name="Jha S."/>
            <person name="Ambudkar S.V."/>
            <person name="Prasad R."/>
        </authorList>
    </citation>
    <scope>FUNCTION</scope>
    <scope>SUBCELLULAR LOCATION</scope>
    <scope>MUTAGENESIS OF ASP-232; GLY-296; PHE-774; GLY-995; GLY-1000; THR-1351; CYS-1418; THR-1449 AND VAL-1456</scope>
</reference>
<reference key="22">
    <citation type="journal article" date="2004" name="Anticancer Res.">
        <title>Adriamycin alters the expression of drug efflux pumps and confers amphotericin B tolerance in Candida albicans.</title>
        <authorList>
            <person name="O'Keeffe J."/>
            <person name="Kavanagh K."/>
        </authorList>
    </citation>
    <scope>INDUCTION</scope>
    <scope>FUNCTION</scope>
</reference>
<reference key="23">
    <citation type="journal article" date="2004" name="Antimicrob. Agents Chemother.">
        <title>Comparison of gene expression profiles of Candida albicans azole-resistant clinical isolates and laboratory strains exposed to drugs inducing multidrug transporters.</title>
        <authorList>
            <person name="Karababa M."/>
            <person name="Coste A.T."/>
            <person name="Rognon B."/>
            <person name="Bille J."/>
            <person name="Sanglard D."/>
        </authorList>
    </citation>
    <scope>INDUCTION</scope>
</reference>
<reference key="24">
    <citation type="journal article" date="2004" name="Antimicrob. Agents Chemother.">
        <title>Adherence of Candida albicans to silicone induces immediate enhanced tolerance to fluconazole.</title>
        <authorList>
            <person name="Mateus C."/>
            <person name="Crow S.A. Jr."/>
            <person name="Ahearn D.G."/>
        </authorList>
    </citation>
    <scope>INDUCTION</scope>
</reference>
<reference key="25">
    <citation type="journal article" date="2004" name="Biochem. Biophys. Res. Commun.">
        <title>Disulfiram is a potent modulator of multidrug transporter Cdr1p of Candida albicans.</title>
        <authorList>
            <person name="Shukla S."/>
            <person name="Sauna Z.E."/>
            <person name="Prasad R."/>
            <person name="Ambudkar S.V."/>
        </authorList>
    </citation>
    <scope>ACTIVITY REGULATION</scope>
</reference>
<reference key="26">
    <citation type="journal article" date="2004" name="Eukaryot. Cell">
        <title>TAC1, transcriptional activator of CDR genes, is a new transcription factor involved in the regulation of Candida albicans ABC transporters CDR1 and CDR2.</title>
        <authorList>
            <person name="Coste A.T."/>
            <person name="Karababa M."/>
            <person name="Ischer F."/>
            <person name="Bille J."/>
            <person name="Sanglard D."/>
        </authorList>
    </citation>
    <scope>INDUCTION</scope>
</reference>
<reference key="27">
    <citation type="journal article" date="2004" name="FEMS Yeast Res.">
        <title>Identification of a negative regulatory element which regulates basal transcription of a multidrug resistance gene CDR1 of Candida albicans.</title>
        <authorList>
            <person name="Gaur N.A."/>
            <person name="Puri N."/>
            <person name="Karnani N."/>
            <person name="Mukhopadhyay G."/>
            <person name="Goswami S.K."/>
            <person name="Prasad R."/>
        </authorList>
    </citation>
    <scope>INDUCTION</scope>
</reference>
<reference key="28">
    <citation type="journal article" date="2004" name="J. Antimicrob. Chemother.">
        <title>Substitution of threonine-1351 in the multidrug transporter Cdr1p of Candida albicans results in hypersusceptibility to antifungal agents and threonine-1351 is essential for synergic effects of calcineurin inhibitor FK520.</title>
        <authorList>
            <person name="Shukla S."/>
            <person name="Ambudkar S.V."/>
            <person name="Prasad R."/>
        </authorList>
    </citation>
    <scope>FUNCTION</scope>
    <scope>MUTAGENESIS OF THR-1351</scope>
    <scope>SUBCELLULAR LOCATION</scope>
</reference>
<reference key="29">
    <citation type="journal article" date="2004" name="J. Antimicrob. Chemother.">
        <title>Regulated overexpression of CDR1 in Candida albicans confers multidrug resistance.</title>
        <authorList>
            <person name="Niimi M."/>
            <person name="Niimi K."/>
            <person name="Takano Y."/>
            <person name="Holmes A.R."/>
            <person name="Fischer F.J."/>
            <person name="Uehara Y."/>
            <person name="Cannon R.D."/>
        </authorList>
    </citation>
    <scope>FUNCTION</scope>
</reference>
<reference key="30">
    <citation type="journal article" date="2004" name="Yeast">
        <title>SRE1 and SRE2 are two specific steroid-responsive modules of Candida drug resistance gene 1 (CDR1) promoter.</title>
        <authorList>
            <person name="Karnani N."/>
            <person name="Gaur N.A."/>
            <person name="Jha S."/>
            <person name="Puri N."/>
            <person name="Krishnamurthy S."/>
            <person name="Goswami S.K."/>
            <person name="Mukhopadhyay G."/>
            <person name="Prasad R."/>
        </authorList>
    </citation>
    <scope>INDUCTION</scope>
</reference>
<reference key="31">
    <citation type="journal article" date="2005" name="Biochem. Biophys. Res. Commun.">
        <title>Expression of the CDR1 efflux pump in clinical Candida albicans isolates is controlled by a negative regulatory element.</title>
        <authorList>
            <person name="Gaur N.A."/>
            <person name="Manoharlal R."/>
            <person name="Saini P."/>
            <person name="Prasad T."/>
            <person name="Mukhopadhyay G."/>
            <person name="Hoefer M."/>
            <person name="Morschhaeuser J."/>
            <person name="Prasad R."/>
        </authorList>
    </citation>
    <scope>INDUCTION</scope>
</reference>
<reference key="32">
    <citation type="journal article" date="2005" name="Biochemistry">
        <title>Functional characterization of N-terminal nucleotide binding domain (NBD-1) of a major ABC drug transporter Cdr1p of Candida albicans: uncommon but conserved Trp326 of Walker B is important for ATP binding.</title>
        <authorList>
            <person name="Rai V."/>
            <person name="Shukla S."/>
            <person name="Jha S."/>
            <person name="Komath S.S."/>
            <person name="Prasad R."/>
        </authorList>
    </citation>
    <scope>DOMAIN</scope>
    <scope>MUTAGENESIS OF TRP-326</scope>
</reference>
<reference key="33">
    <citation type="journal article" date="2005" name="J. Antimicrob. Chemother.">
        <title>Alanine scanning of transmembrane helix 11 of Cdr1p ABC antifungal efflux pump of Candida albicans: identification of amino acid residues critical for drug efflux.</title>
        <authorList>
            <person name="Saini P."/>
            <person name="Prasad T."/>
            <person name="Gaur N.A."/>
            <person name="Shukla S."/>
            <person name="Jha S."/>
            <person name="Komath S.S."/>
            <person name="Khan L.A."/>
            <person name="Haq Q.M."/>
            <person name="Prasad R."/>
        </authorList>
    </citation>
    <scope>FUNCTION</scope>
    <scope>SUBCELLULAR LOCATION</scope>
    <scope>MUTAGENESIS OF ALA-1346; ALA-1347; THR-1351; THR-1355 AND LEU-1358</scope>
</reference>
<reference key="34">
    <citation type="journal article" date="2006" name="Antimicrob. Agents Chemother.">
        <title>Time course of microbiologic outcome and gene expression in Candida albicans during and following in vitro and in vivo exposure to fluconazole.</title>
        <authorList>
            <person name="Lepak A."/>
            <person name="Nett J."/>
            <person name="Lincoln L."/>
            <person name="Marchillo K."/>
            <person name="Andes D."/>
        </authorList>
    </citation>
    <scope>INDUCTION</scope>
</reference>
<reference key="35">
    <citation type="journal article" date="2006" name="Biochemistry">
        <title>Characterization of Cdr1p, a major multidrug efflux protein of Candida albicans: purified protein is amenable to intrinsic fluorescence analysis.</title>
        <authorList>
            <person name="Shukla S."/>
            <person name="Rai V."/>
            <person name="Banerjee D."/>
            <person name="Prasad R."/>
        </authorList>
    </citation>
    <scope>FUNCTION</scope>
</reference>
<reference key="36">
    <citation type="journal article" date="2006" name="BMC Mol. Biol.">
        <title>Serum repressing efflux pump CDR1 in Candida albicans.</title>
        <authorList>
            <person name="Yang Y.L."/>
            <person name="Lin Y.H."/>
            <person name="Tsao M.Y."/>
            <person name="Chen C.G."/>
            <person name="Shih H.I."/>
            <person name="Fan J.C."/>
            <person name="Wang J.S."/>
            <person name="Lo H.J."/>
        </authorList>
    </citation>
    <scope>INDUCTION</scope>
</reference>
<reference key="37">
    <citation type="journal article" date="2006" name="Eukaryot. Cell">
        <title>Cellular and molecular biology of Candida albicans estrogen response.</title>
        <authorList>
            <person name="Cheng G."/>
            <person name="Yeater K.M."/>
            <person name="Hoyer L.L."/>
        </authorList>
    </citation>
    <scope>INDUCTION</scope>
    <scope>DISRUPTION PHENOTYPE</scope>
</reference>
<reference key="38">
    <citation type="journal article" date="2006" name="Int. J. Antimicrob. Agents">
        <title>Drug susceptibilities of yeast cells are affected when expressing mutant Candida albicans drug resistance protein.</title>
        <authorList>
            <person name="Gao P.H."/>
            <person name="Cao Y.B."/>
            <person name="Jia X.M."/>
            <person name="Cao Y.Y."/>
            <person name="Quan H."/>
            <person name="Wang Y."/>
            <person name="Jiang Y.Y."/>
        </authorList>
    </citation>
    <scope>FUNCTION</scope>
    <scope>MUTAGENESIS OF TRP-629</scope>
</reference>
<reference key="39">
    <citation type="journal article" date="2006" name="J. Antimicrob. Chemother.">
        <title>Antimicrobial peptides enhance the candidacidal activity of antifungal drugs by promoting the efflux of ATP from Candida cells.</title>
        <authorList>
            <person name="Tanida T."/>
            <person name="Okamoto T."/>
            <person name="Ueta E."/>
            <person name="Yamamoto T."/>
            <person name="Osaki T."/>
        </authorList>
    </citation>
    <scope>INDUCTION</scope>
    <scope>FUNCTION</scope>
</reference>
<reference key="40">
    <citation type="journal article" date="2006" name="J. Med. Microbiol.">
        <title>The DNA-binding domain of CaNdt80p is required to activate CDR1 involved in drug resistance in Candida albicans.</title>
        <authorList>
            <person name="Wang J.S."/>
            <person name="Yang Y.L."/>
            <person name="Wu C.J."/>
            <person name="Ouyang K.J."/>
            <person name="Tseng K.Y."/>
            <person name="Chen C.G."/>
            <person name="Wang H."/>
            <person name="Lo H.J."/>
        </authorList>
    </citation>
    <scope>INDUCTION</scope>
</reference>
<reference key="41">
    <citation type="journal article" date="2006" name="Microbiology">
        <title>Chimeras of the ABC drug transporter Cdr1p reveal functional indispensability of transmembrane domains and nucleotide-binding domains, but transmembrane segment 12 is replaceable with the corresponding homologous region of the non-drug transporter Cdr3p.</title>
        <authorList>
            <person name="Saini P."/>
            <person name="Gaur N.A."/>
            <person name="Prasad R."/>
        </authorList>
    </citation>
    <scope>FUNCTION</scope>
    <scope>DOMAIN</scope>
    <scope>SUBCELLULAR LOCATION</scope>
</reference>
<reference key="42">
    <citation type="journal article" date="2006" name="Yeast">
        <title>Key physiological differences in Candida albicans CDR1 induction by steroid hormones and antifungal drugs.</title>
        <authorList>
            <person name="Larsen B."/>
            <person name="Anderson S."/>
            <person name="Brockman A."/>
            <person name="Essmann M."/>
            <person name="Schmidt M."/>
        </authorList>
    </citation>
    <scope>INDUCTION</scope>
</reference>
<reference key="43">
    <citation type="journal article" date="2007" name="Biochemistry">
        <title>Candida drug resistance protein 1, a major multidrug ATP binding cassette transporter of Candida albicans, translocates fluorescent phospholipids in a reconstituted system.</title>
        <authorList>
            <person name="Shukla S."/>
            <person name="Rai V."/>
            <person name="Saini P."/>
            <person name="Banerjee D."/>
            <person name="Menon A.K."/>
            <person name="Prasad R."/>
        </authorList>
    </citation>
    <scope>FUNCTION</scope>
</reference>
<reference key="44">
    <citation type="journal article" date="2007" name="Biol. Pharm. Bull.">
        <title>Fcr1p inhibits development of fluconazole resistance in Candida albicans by abolishing CDR1 induction.</title>
        <authorList>
            <person name="Shen H."/>
            <person name="An M.M."/>
            <person name="Wang D.J."/>
            <person name="Xu Z."/>
            <person name="Zhang J.D."/>
            <person name="Gao P.H."/>
            <person name="Cao Y.Y."/>
            <person name="Cao Y.B."/>
            <person name="Jiang Y.Y."/>
        </authorList>
    </citation>
    <scope>INDUCTION</scope>
    <scope>FUNCTION</scope>
</reference>
<reference key="45">
    <citation type="journal article" date="2008" name="Antimicrob. Agents Chemother.">
        <title>Multidrug transporters CaCdr1p and CaMdr1p of Candida albicans display different lipid specificities: both ergosterol and sphingolipids are essential for targeting of CaCdr1p to membrane rafts.</title>
        <authorList>
            <person name="Pasrija R."/>
            <person name="Panwar S.L."/>
            <person name="Prasad R."/>
        </authorList>
    </citation>
    <scope>SUBCELLULAR LOCATION</scope>
    <scope>FUNCTION</scope>
</reference>
<reference key="46">
    <citation type="journal article" date="2008" name="Antimicrob. Agents Chemother.">
        <title>Transcriptional activation and increased mRNA stability contribute to overexpression of CDR1 in azole-resistant Candida albicans.</title>
        <authorList>
            <person name="Manoharlal R."/>
            <person name="Gaur N.A."/>
            <person name="Panwar S.L."/>
            <person name="Morschhaeuser J."/>
            <person name="Prasad R."/>
        </authorList>
    </citation>
    <scope>INDUCTION</scope>
    <scope>FUNCTION</scope>
</reference>
<reference key="47">
    <citation type="journal article" date="2008" name="Antimicrob. Agents Chemother.">
        <title>ABC transporter Cdr1p contributes more than Cdr2p does to fluconazole efflux in fluconazole-resistant Candida albicans clinical isolates.</title>
        <authorList>
            <person name="Holmes A.R."/>
            <person name="Lin Y.H."/>
            <person name="Niimi K."/>
            <person name="Lamping E."/>
            <person name="Keniya M."/>
            <person name="Niimi M."/>
            <person name="Tanabe K."/>
            <person name="Monk B.C."/>
            <person name="Cannon R.D."/>
        </authorList>
    </citation>
    <scope>FUNCTION</scope>
</reference>
<reference key="48">
    <citation type="journal article" date="2009" name="Antimicrob. Agents Chemother.">
        <title>Relative contributions of the Candida albicans ABC transporters Cdr1p and Cdr2p to clinical azole resistance.</title>
        <authorList>
            <person name="Tsao S."/>
            <person name="Rahkhoodaee F."/>
            <person name="Raymond M."/>
        </authorList>
    </citation>
    <scope>FUNCTION</scope>
</reference>
<reference key="49">
    <citation type="journal article" date="2009" name="Biochim. Biophys. Acta">
        <title>The amino acid residues of transmembrane helix 5 of multidrug resistance protein CaCdr1p of Candida albicans are involved in substrate specificity and drug transport.</title>
        <authorList>
            <person name="Puri N."/>
            <person name="Gaur M."/>
            <person name="Sharma M."/>
            <person name="Shukla S."/>
            <person name="Ambudkar S.V."/>
            <person name="Prasad R."/>
        </authorList>
    </citation>
    <scope>FUNCTION</scope>
    <scope>MUTAGENESIS OF THR-658; PRO-659; ALA-660; THR-661; VAL-662; LEU-663; LEU-664; LEU-665; MET-667; VAL-668; ILE-669; TYR-670; THR-671; GLY-672; PHE-673; VAL-674; ILE-675; PRO-676; THR-677 AND PRO-678</scope>
</reference>
<reference key="50">
    <citation type="journal article" date="2009" name="Yakugaku Zasshi">
        <title>Mechanism of action of tetrandrine, a natural inhibitor of Candida albicans drug efflux pumps.</title>
        <authorList>
            <person name="Zhang H."/>
            <person name="Gao A."/>
            <person name="Li F."/>
            <person name="Zhang G."/>
            <person name="Ho H.I."/>
            <person name="Liao W."/>
        </authorList>
    </citation>
    <scope>INDUCTION</scope>
</reference>
<reference key="51">
    <citation type="journal article" date="2010" name="Biochim. Biophys. Acta">
        <title>Divergent signature motifs of nucleotide binding domains of ABC multidrug transporter, CaCdr1p of pathogenic Candida albicans, are functionally asymmetric and noninterchangeable.</title>
        <authorList>
            <person name="Kumar A."/>
            <person name="Shukla S."/>
            <person name="Mandal A."/>
            <person name="Shukla S."/>
            <person name="Ambudkar S.V."/>
            <person name="Prasad R."/>
        </authorList>
    </citation>
    <scope>DOMAIN</scope>
</reference>
<reference key="52">
    <citation type="journal article" date="2010" name="Eukaryot. Cell">
        <title>Fluconazole transport into Candida albicans secretory vesicles by the membrane proteins Cdr1p, Cdr2p, and Mdr1p.</title>
        <authorList>
            <person name="Basso L.R. Jr."/>
            <person name="Gast C.E."/>
            <person name="Mao Y."/>
            <person name="Wong B."/>
        </authorList>
    </citation>
    <scope>FUNCTION</scope>
    <scope>BIOPHYSICOCHEMICAL PROPERTIES</scope>
</reference>
<reference key="53">
    <citation type="journal article" date="2010" name="J. Antimicrob. Chemother.">
        <title>Persistent Candida albicans colonization and molecular mechanisms of azole resistance in autoimmune polyendocrinopathy-candidiasis-ectodermal dystrophy (APECED) patients.</title>
        <authorList>
            <person name="Siikala E."/>
            <person name="Rautemaa R."/>
            <person name="Richardson M."/>
            <person name="Saxen H."/>
            <person name="Bowyer P."/>
            <person name="Sanglard D."/>
        </authorList>
    </citation>
    <scope>FUNCTION</scope>
</reference>
<reference key="54">
    <citation type="journal article" date="2010" name="J. Appl. Microbiol.">
        <title>Synergistic mechanisms of retigeric acid B and azoles against Candida albicans.</title>
        <authorList>
            <person name="Sun L.M."/>
            <person name="Cheng A.X."/>
            <person name="Wu X.Z."/>
            <person name="Zhang H.J."/>
            <person name="Lou H.X."/>
        </authorList>
    </citation>
    <scope>INDUCTION</scope>
    <scope>FUNCTION</scope>
</reference>
<reference key="55">
    <citation type="journal article" date="2011" name="Biosci. Rep.">
        <title>Molecular determinants of transient and reversible induced up-regulation of CaCDR1 in azole susceptible clinical isolates of Candida albicans.</title>
        <authorList>
            <person name="Manoharlal R."/>
            <person name="Sharma M."/>
            <person name="Prasad R."/>
        </authorList>
    </citation>
    <scope>INDUCTION</scope>
</reference>
<reference key="56">
    <citation type="journal article" date="2011" name="Eukaryot. Cell">
        <title>Ncb2 is involved in activated transcription of CDR1 in azole-resistant clinical isolates of Candida albicans.</title>
        <authorList>
            <person name="Shukla S."/>
            <person name="Yadav V."/>
            <person name="Mukhopadhyay G."/>
            <person name="Prasad R."/>
        </authorList>
    </citation>
    <scope>INDUCTION</scope>
</reference>
<reference key="57">
    <citation type="journal article" date="2011" name="J. Med. Microbiol.">
        <title>Transcriptional regulation of drug-resistance genes in Candida albicans biofilms in response to antifungals.</title>
        <authorList>
            <person name="Watamoto T."/>
            <person name="Samaranayake L.P."/>
            <person name="Egusa H."/>
            <person name="Yatani H."/>
            <person name="Seneviratne C.J."/>
        </authorList>
    </citation>
    <scope>INDUCTION</scope>
</reference>
<reference key="58">
    <citation type="journal article" date="2011" name="Med. Mycol.">
        <title>Doxorubicin induces drug efflux pumps in Candida albicans.</title>
        <authorList>
            <person name="Kofla G."/>
            <person name="Turner V."/>
            <person name="Schulz B."/>
            <person name="Storch U."/>
            <person name="Froelich D."/>
            <person name="Rognon B."/>
            <person name="Coste A.T."/>
            <person name="Sanglard D."/>
            <person name="Ruhnke M."/>
        </authorList>
    </citation>
    <scope>INDUCTION</scope>
</reference>
<reference key="59">
    <citation type="journal article" date="2011" name="PLoS ONE">
        <title>Farnesol-induced apoptosis in Candida albicans is mediated by Cdr1-p extrusion and depletion of intracellular glutathione.</title>
        <authorList>
            <person name="Zhu J."/>
            <person name="Krom B.P."/>
            <person name="Sanglard D."/>
            <person name="Intapa C."/>
            <person name="Dawson C.C."/>
            <person name="Peters B.M."/>
            <person name="Shirtliff M.E."/>
            <person name="Jabra-Rizk M.A."/>
        </authorList>
    </citation>
    <scope>FUNCTION</scope>
</reference>
<reference key="60">
    <citation type="journal article" date="2012" name="Biochem. Biophys. Res. Commun.">
        <title>Alanine scanning of all cysteines and construction of a functional cysteine-less Cdr1p, a multidrug ABC transporter of Candida albicans.</title>
        <authorList>
            <person name="Prasad R."/>
            <person name="Shah A.H."/>
            <person name="Sanwal H."/>
            <person name="Kapoor K."/>
        </authorList>
    </citation>
    <scope>FUNCTION</scope>
    <scope>MUTAGENESIS OF CYS-1056; CYS-1091; CYS-1106; CYS-1294 AND CYS-1336</scope>
</reference>
<reference key="61">
    <citation type="journal article" date="2013" name="Antimicrob. Agents Chemother.">
        <title>Mitochondria influence CDR1 efflux pump activity, Hog1-mediated oxidative stress pathway, iron homeostasis, and ergosterol levels in Candida albicans.</title>
        <authorList>
            <person name="Thomas E."/>
            <person name="Roman E."/>
            <person name="Claypool S."/>
            <person name="Manzoor N."/>
            <person name="Pla J."/>
            <person name="Panwar S.L."/>
        </authorList>
    </citation>
    <scope>SUBCELLULAR LOCATION</scope>
    <scope>FUNCTION</scope>
</reference>
<reference key="62">
    <citation type="journal article" date="2013" name="J. Biol. Chem.">
        <title>Insight into pleiotropic drug resistance ATP-binding cassette pump drug transport through mutagenesis of Cdr1p transmembrane domains.</title>
        <authorList>
            <person name="Rawal M.K."/>
            <person name="Khan M.F."/>
            <person name="Kapoor K."/>
            <person name="Goyal N."/>
            <person name="Sen S."/>
            <person name="Saxena A.K."/>
            <person name="Lynn A.M."/>
            <person name="Tyndall J.D."/>
            <person name="Monk B.C."/>
            <person name="Cannon R.D."/>
            <person name="Komath S.S."/>
            <person name="Prasad R."/>
        </authorList>
    </citation>
    <scope>SUBCELLULAR LOCATION</scope>
    <scope>FUNCTION</scope>
    <scope>MUTAGENESIS OF PHE-551; PHE-552; PHE-559; SER-561; GLU-564; MET-604; ASN-609; ARG-644; PHE-1230; THR-1331; CYS-1336 AND PHE-1360</scope>
</reference>
<protein>
    <recommendedName>
        <fullName evidence="64">Pleiotropic ABC efflux transporter of multiple drugs CDR1</fullName>
    </recommendedName>
    <alternativeName>
        <fullName evidence="64">Pleiotropic drug resistance protein CDR1</fullName>
    </alternativeName>
</protein>
<feature type="chain" id="PRO_0000431582" description="Pleiotropic ABC efflux transporter of multiple drugs CDR1">
    <location>
        <begin position="1"/>
        <end position="1501"/>
    </location>
</feature>
<feature type="topological domain" description="Cytoplasmic" evidence="64">
    <location>
        <begin position="1"/>
        <end position="513"/>
    </location>
</feature>
<feature type="transmembrane region" description="Helical; Name=1" evidence="1">
    <location>
        <begin position="514"/>
        <end position="534"/>
    </location>
</feature>
<feature type="topological domain" description="Extracellular" evidence="64">
    <location>
        <begin position="535"/>
        <end position="548"/>
    </location>
</feature>
<feature type="transmembrane region" description="Helical; Name=2" evidence="1">
    <location>
        <begin position="549"/>
        <end position="569"/>
    </location>
</feature>
<feature type="topological domain" description="Cytoplasmic" evidence="64">
    <location>
        <begin position="570"/>
        <end position="597"/>
    </location>
</feature>
<feature type="transmembrane region" description="Helical; Name=3" evidence="1">
    <location>
        <begin position="598"/>
        <end position="618"/>
    </location>
</feature>
<feature type="topological domain" description="Extracellular" evidence="64">
    <location>
        <begin position="619"/>
        <end position="622"/>
    </location>
</feature>
<feature type="transmembrane region" description="Helical; Name=4" evidence="1">
    <location>
        <begin position="623"/>
        <end position="643"/>
    </location>
</feature>
<feature type="topological domain" description="Cytoplasmic" evidence="64">
    <location>
        <begin position="644"/>
        <end position="654"/>
    </location>
</feature>
<feature type="transmembrane region" description="Helical; Name=5" evidence="1">
    <location>
        <begin position="655"/>
        <end position="675"/>
    </location>
</feature>
<feature type="topological domain" description="Extracellular" evidence="64">
    <location>
        <begin position="676"/>
        <end position="764"/>
    </location>
</feature>
<feature type="transmembrane region" description="Helical; Name=6" evidence="1">
    <location>
        <begin position="765"/>
        <end position="785"/>
    </location>
</feature>
<feature type="topological domain" description="Cytoplasmic" evidence="64">
    <location>
        <begin position="786"/>
        <end position="1195"/>
    </location>
</feature>
<feature type="transmembrane region" description="Helical; Name=7" evidence="1">
    <location>
        <begin position="1196"/>
        <end position="1216"/>
    </location>
</feature>
<feature type="topological domain" description="Extracellular" evidence="64">
    <location>
        <begin position="1217"/>
        <end position="1229"/>
    </location>
</feature>
<feature type="transmembrane region" description="Helical; Name=8" evidence="1">
    <location>
        <begin position="1230"/>
        <end position="1250"/>
    </location>
</feature>
<feature type="topological domain" description="Cytoplasmic" evidence="64">
    <location>
        <begin position="1251"/>
        <end position="1280"/>
    </location>
</feature>
<feature type="transmembrane region" description="Helical; Name=9" evidence="1">
    <location>
        <begin position="1281"/>
        <end position="1301"/>
    </location>
</feature>
<feature type="topological domain" description="Extracellular" evidence="64">
    <location>
        <begin position="1302"/>
        <end position="1314"/>
    </location>
</feature>
<feature type="transmembrane region" description="Helical; Name=10" evidence="1">
    <location>
        <begin position="1315"/>
        <end position="1335"/>
    </location>
</feature>
<feature type="topological domain" description="Cytoplasmic" evidence="64">
    <location>
        <begin position="1336"/>
        <end position="1355"/>
    </location>
</feature>
<feature type="transmembrane region" description="Helical; Name=11" evidence="1">
    <location>
        <begin position="1356"/>
        <end position="1376"/>
    </location>
</feature>
<feature type="topological domain" description="Extracellular" evidence="64">
    <location>
        <begin position="1377"/>
        <end position="1466"/>
    </location>
</feature>
<feature type="transmembrane region" description="Helical; Name=12" evidence="1">
    <location>
        <begin position="1467"/>
        <end position="1487"/>
    </location>
</feature>
<feature type="topological domain" description="Cytoplasmic" evidence="64">
    <location>
        <begin position="1488"/>
        <end position="1501"/>
    </location>
</feature>
<feature type="domain" description="ABC transporter 1" evidence="2">
    <location>
        <begin position="150"/>
        <end position="404"/>
    </location>
</feature>
<feature type="domain" description="ABC transporter 2" evidence="2">
    <location>
        <begin position="859"/>
        <end position="1103"/>
    </location>
</feature>
<feature type="region of interest" description="Disordered" evidence="4">
    <location>
        <begin position="1"/>
        <end position="30"/>
    </location>
</feature>
<feature type="region of interest" description="NBD1" evidence="63">
    <location>
        <begin position="2"/>
        <end position="512"/>
    </location>
</feature>
<feature type="region of interest" description="NBD2" evidence="63">
    <location>
        <begin position="786"/>
        <end position="1195"/>
    </location>
</feature>
<feature type="coiled-coil region" evidence="1">
    <location>
        <begin position="1137"/>
        <end position="1164"/>
    </location>
</feature>
<feature type="compositionally biased region" description="Basic and acidic residues" evidence="4">
    <location>
        <begin position="8"/>
        <end position="18"/>
    </location>
</feature>
<feature type="binding site" evidence="2">
    <location>
        <begin position="895"/>
        <end position="902"/>
    </location>
    <ligand>
        <name>ATP</name>
        <dbReference type="ChEBI" id="CHEBI:30616"/>
    </ligand>
</feature>
<feature type="mutagenesis site" description="Impairs NBD-mediated ATP hydrolysis." evidence="14">
    <original>C</original>
    <variation>A</variation>
    <location>
        <position position="193"/>
    </location>
</feature>
<feature type="mutagenesis site" description="Leads to general drug-sensitivity." evidence="15">
    <original>D</original>
    <variation>K</variation>
    <location>
        <position position="232"/>
    </location>
</feature>
<feature type="mutagenesis site" description="Leads to selective drug-sensitivity." evidence="15">
    <original>G</original>
    <variation>D</variation>
    <location>
        <position position="296"/>
    </location>
</feature>
<feature type="mutagenesis site" description="Impairs NBD ATP-binding." evidence="26">
    <original>W</original>
    <variation>A</variation>
    <location>
        <position position="326"/>
    </location>
</feature>
<feature type="mutagenesis site" description="Leads to selective drug-sensitivity." evidence="55">
    <original>F</original>
    <variation>A</variation>
    <location>
        <position position="551"/>
    </location>
</feature>
<feature type="mutagenesis site" description="Leads to reduced drug efflux but shows normal ATPase activity." evidence="55">
    <original>F</original>
    <variation>A</variation>
    <location>
        <position position="552"/>
    </location>
</feature>
<feature type="mutagenesis site" description="Leads to reduced drug efflux and ATPase activity." evidence="55">
    <original>F</original>
    <variation>A</variation>
    <location>
        <position position="559"/>
    </location>
</feature>
<feature type="mutagenesis site" description="Leads to selective drug-sensitivity." evidence="55">
    <original>S</original>
    <variation>A</variation>
    <location>
        <position position="561"/>
    </location>
</feature>
<feature type="mutagenesis site" description="Leads to selective drug-sensitivity." evidence="55">
    <original>E</original>
    <variation>A</variation>
    <location>
        <position position="564"/>
    </location>
</feature>
<feature type="mutagenesis site" description="Leads to selective drug-sensitivity." evidence="55">
    <original>M</original>
    <variation>A</variation>
    <location>
        <position position="604"/>
    </location>
</feature>
<feature type="mutagenesis site" description="Leads to selective drug-sensitivity." evidence="55">
    <original>N</original>
    <variation>A</variation>
    <location>
        <position position="609"/>
    </location>
</feature>
<feature type="mutagenesis site" description="Leads to selective drug-sensitivity." evidence="34">
    <original>W</original>
    <variation>L</variation>
    <location>
        <position position="629"/>
    </location>
</feature>
<feature type="mutagenesis site" description="Leads to reduced drug efflux but shows normal ATPase activity." evidence="55">
    <original>R</original>
    <variation>A</variation>
    <location>
        <position position="644"/>
    </location>
</feature>
<feature type="mutagenesis site" description="Leads to general drug-sensitivity." evidence="43">
    <original>T</original>
    <variation>A</variation>
    <location>
        <position position="658"/>
    </location>
</feature>
<feature type="mutagenesis site" description="Leads to selective drug-sensitivity." evidence="43">
    <original>P</original>
    <variation>A</variation>
    <location>
        <position position="659"/>
    </location>
</feature>
<feature type="mutagenesis site" description="Leads to general drug-sensitivity." evidence="43">
    <original>A</original>
    <variation>G</variation>
    <location>
        <position position="660"/>
    </location>
</feature>
<feature type="mutagenesis site" description="Leads to general drug-sensitivity." evidence="43">
    <original>T</original>
    <variation>A</variation>
    <location>
        <position position="661"/>
    </location>
</feature>
<feature type="mutagenesis site" description="Leads to general drug-sensitivity." evidence="43">
    <original>V</original>
    <variation>A</variation>
    <location>
        <position position="662"/>
    </location>
</feature>
<feature type="mutagenesis site" description="Leads to selective drug-sensitivity." evidence="43">
    <original>L</original>
    <variation>A</variation>
    <location>
        <position position="663"/>
    </location>
</feature>
<feature type="mutagenesis site" description="Leads to selective drug-sensitivity." evidence="43">
    <original>L</original>
    <variation>A</variation>
    <location>
        <position position="664"/>
    </location>
</feature>
<feature type="mutagenesis site" description="Leads to general drug-sensitivity." evidence="43">
    <original>L</original>
    <variation>A</variation>
    <location>
        <position position="665"/>
    </location>
</feature>
<feature type="mutagenesis site" description="Leads to selective drug-sensitivity." evidence="43">
    <original>M</original>
    <variation>A</variation>
    <location>
        <position position="667"/>
    </location>
</feature>
<feature type="mutagenesis site" description="Leads to selective drug-sensitivity." evidence="43">
    <original>V</original>
    <variation>A</variation>
    <location>
        <position position="668"/>
    </location>
</feature>
<feature type="mutagenesis site" description="Leads to general drug-sensitivity." evidence="43">
    <original>I</original>
    <variation>A</variation>
    <location>
        <position position="669"/>
    </location>
</feature>
<feature type="mutagenesis site" description="Leads to general drug-sensitivity." evidence="43">
    <original>Y</original>
    <variation>A</variation>
    <location>
        <position position="670"/>
    </location>
</feature>
<feature type="mutagenesis site" description="Leads to selective drug-sensitivity." evidence="43">
    <original>T</original>
    <variation>A</variation>
    <location>
        <position position="671"/>
    </location>
</feature>
<feature type="mutagenesis site" description="Leads to selective drug-sensitivity." evidence="43">
    <original>G</original>
    <variation>A</variation>
    <location>
        <position position="672"/>
    </location>
</feature>
<feature type="mutagenesis site" description="Leads to selective drug-sensitivity." evidence="43">
    <original>F</original>
    <variation>A</variation>
    <location>
        <position position="673"/>
    </location>
</feature>
<feature type="mutagenesis site" description="Leads to selective drug-sensitivity." evidence="43">
    <original>V</original>
    <variation>A</variation>
    <location>
        <position position="674"/>
    </location>
</feature>
<feature type="mutagenesis site" description="Leads to selective drug-sensitivity." evidence="43">
    <original>I</original>
    <variation>A</variation>
    <location>
        <position position="675"/>
    </location>
</feature>
<feature type="mutagenesis site" description="Leads to selective drug-sensitivity." evidence="43">
    <original>P</original>
    <variation>A</variation>
    <location>
        <position position="676"/>
    </location>
</feature>
<feature type="mutagenesis site" description="Leads to selective drug-sensitivity." evidence="43">
    <original>T</original>
    <variation>A</variation>
    <location>
        <position position="677"/>
    </location>
</feature>
<feature type="mutagenesis site" description="Leads to selective drug-sensitivity." evidence="43">
    <original>P</original>
    <variation>A</variation>
    <location>
        <position position="678"/>
    </location>
</feature>
<feature type="mutagenesis site" description="Leads to selective drug-sensitivity." evidence="15">
    <original>F</original>
    <variation>A</variation>
    <location>
        <position position="774"/>
    </location>
</feature>
<feature type="mutagenesis site" description="Leads to mislocalization and general drug-sensitivity." evidence="15">
    <location>
        <position position="774"/>
    </location>
</feature>
<feature type="mutagenesis site" description="Leads to selective drug-sensitivity." evidence="15">
    <original>G</original>
    <variation>S</variation>
    <location>
        <position position="995"/>
    </location>
</feature>
<feature type="mutagenesis site" description="Leads to selective drug-sensitivity." evidence="15">
    <original>G</original>
    <variation>C</variation>
    <location>
        <position position="1000"/>
    </location>
</feature>
<feature type="mutagenesis site" description="Leads to general drug-sensitivity." evidence="53">
    <original>C</original>
    <variation>A</variation>
    <location>
        <position position="1056"/>
    </location>
</feature>
<feature type="mutagenesis site" description="Leads to general drug-sensitivity." evidence="53">
    <original>C</original>
    <variation>A</variation>
    <location>
        <position position="1091"/>
    </location>
</feature>
<feature type="mutagenesis site" description="Leads to general drug-sensitivity." evidence="53">
    <original>C</original>
    <variation>A</variation>
    <location>
        <position position="1106"/>
    </location>
</feature>
<feature type="mutagenesis site" description="Leads to selective drug-sensitivity." evidence="55">
    <original>F</original>
    <variation>A</variation>
    <location>
        <position position="1230"/>
    </location>
</feature>
<feature type="mutagenesis site" description="Leads to general drug-sensitivity." evidence="53">
    <original>C</original>
    <variation>A</variation>
    <location>
        <position position="1294"/>
    </location>
</feature>
<feature type="mutagenesis site" description="Leads to selective drug-sensitivity." evidence="55">
    <original>T</original>
    <variation>A</variation>
    <location>
        <position position="1331"/>
    </location>
</feature>
<feature type="mutagenesis site" description="Leads to reduced drug efflux and ATPase activity." evidence="53 55">
    <original>C</original>
    <variation>A</variation>
    <location>
        <position position="1336"/>
    </location>
</feature>
<feature type="mutagenesis site" description="Leads to selective drug-sensitivity." evidence="28">
    <original>A</original>
    <variation>G</variation>
    <location>
        <position position="1346"/>
    </location>
</feature>
<feature type="mutagenesis site" description="Leads to selective drug-sensitivity." evidence="28">
    <original>A</original>
    <variation>G</variation>
    <location>
        <position position="1347"/>
    </location>
</feature>
<feature type="mutagenesis site" description="Leads to selective drug-sensitivity." evidence="28">
    <original>T</original>
    <variation>A</variation>
    <location>
        <position position="1351"/>
    </location>
</feature>
<feature type="mutagenesis site" description="Leads to general drug-sensitivity." evidence="15 19">
    <original>T</original>
    <variation>F</variation>
    <location>
        <position position="1351"/>
    </location>
</feature>
<feature type="mutagenesis site" description="Leads to selective drug-sensitivity." evidence="28">
    <original>T</original>
    <variation>A</variation>
    <location>
        <position position="1355"/>
    </location>
</feature>
<feature type="mutagenesis site" description="Leads to selective drug-sensitivity." evidence="28">
    <original>L</original>
    <variation>A</variation>
    <location>
        <position position="1358"/>
    </location>
</feature>
<feature type="mutagenesis site" description="Leads to reduced drug efflux but shows normal ATPase activity." evidence="55">
    <original>F</original>
    <variation>A</variation>
    <location>
        <position position="1360"/>
    </location>
</feature>
<feature type="mutagenesis site" description="Leads to selective drug-sensitivity." evidence="15">
    <original>C</original>
    <variation>Y</variation>
    <location>
        <position position="1418"/>
    </location>
</feature>
<feature type="mutagenesis site" description="Leads to selective drug-sensitivity." evidence="15">
    <original>T</original>
    <variation>A</variation>
    <location>
        <position position="1449"/>
    </location>
</feature>
<feature type="mutagenesis site" description="Leads to selective drug-sensitivity." evidence="15">
    <original>V</original>
    <variation>A</variation>
    <location>
        <position position="1456"/>
    </location>
</feature>
<organism>
    <name type="scientific">Candida albicans (strain SC5314 / ATCC MYA-2876)</name>
    <name type="common">Yeast</name>
    <dbReference type="NCBI Taxonomy" id="237561"/>
    <lineage>
        <taxon>Eukaryota</taxon>
        <taxon>Fungi</taxon>
        <taxon>Dikarya</taxon>
        <taxon>Ascomycota</taxon>
        <taxon>Saccharomycotina</taxon>
        <taxon>Pichiomycetes</taxon>
        <taxon>Debaryomycetaceae</taxon>
        <taxon>Candida/Lodderomyces clade</taxon>
        <taxon>Candida</taxon>
    </lineage>
</organism>
<name>CDR1_CANAL</name>
<proteinExistence type="evidence at protein level"/>
<evidence type="ECO:0000255" key="1"/>
<evidence type="ECO:0000255" key="2">
    <source>
        <dbReference type="PROSITE-ProRule" id="PRU00434"/>
    </source>
</evidence>
<evidence type="ECO:0000255" key="3">
    <source>
        <dbReference type="PROSITE-ProRule" id="PRU01700"/>
    </source>
</evidence>
<evidence type="ECO:0000256" key="4">
    <source>
        <dbReference type="SAM" id="MobiDB-lite"/>
    </source>
</evidence>
<evidence type="ECO:0000269" key="5">
    <source>
    </source>
</evidence>
<evidence type="ECO:0000269" key="6">
    <source>
    </source>
</evidence>
<evidence type="ECO:0000269" key="7">
    <source>
    </source>
</evidence>
<evidence type="ECO:0000269" key="8">
    <source>
    </source>
</evidence>
<evidence type="ECO:0000269" key="9">
    <source>
    </source>
</evidence>
<evidence type="ECO:0000269" key="10">
    <source>
    </source>
</evidence>
<evidence type="ECO:0000269" key="11">
    <source>
    </source>
</evidence>
<evidence type="ECO:0000269" key="12">
    <source>
    </source>
</evidence>
<evidence type="ECO:0000269" key="13">
    <source>
    </source>
</evidence>
<evidence type="ECO:0000269" key="14">
    <source>
    </source>
</evidence>
<evidence type="ECO:0000269" key="15">
    <source>
    </source>
</evidence>
<evidence type="ECO:0000269" key="16">
    <source>
    </source>
</evidence>
<evidence type="ECO:0000269" key="17">
    <source>
    </source>
</evidence>
<evidence type="ECO:0000269" key="18">
    <source>
    </source>
</evidence>
<evidence type="ECO:0000269" key="19">
    <source>
    </source>
</evidence>
<evidence type="ECO:0000269" key="20">
    <source>
    </source>
</evidence>
<evidence type="ECO:0000269" key="21">
    <source>
    </source>
</evidence>
<evidence type="ECO:0000269" key="22">
    <source>
    </source>
</evidence>
<evidence type="ECO:0000269" key="23">
    <source>
    </source>
</evidence>
<evidence type="ECO:0000269" key="24">
    <source>
    </source>
</evidence>
<evidence type="ECO:0000269" key="25">
    <source>
    </source>
</evidence>
<evidence type="ECO:0000269" key="26">
    <source>
    </source>
</evidence>
<evidence type="ECO:0000269" key="27">
    <source>
    </source>
</evidence>
<evidence type="ECO:0000269" key="28">
    <source>
    </source>
</evidence>
<evidence type="ECO:0000269" key="29">
    <source>
    </source>
</evidence>
<evidence type="ECO:0000269" key="30">
    <source>
    </source>
</evidence>
<evidence type="ECO:0000269" key="31">
    <source>
    </source>
</evidence>
<evidence type="ECO:0000269" key="32">
    <source>
    </source>
</evidence>
<evidence type="ECO:0000269" key="33">
    <source>
    </source>
</evidence>
<evidence type="ECO:0000269" key="34">
    <source>
    </source>
</evidence>
<evidence type="ECO:0000269" key="35">
    <source>
    </source>
</evidence>
<evidence type="ECO:0000269" key="36">
    <source>
    </source>
</evidence>
<evidence type="ECO:0000269" key="37">
    <source>
    </source>
</evidence>
<evidence type="ECO:0000269" key="38">
    <source>
    </source>
</evidence>
<evidence type="ECO:0000269" key="39">
    <source>
    </source>
</evidence>
<evidence type="ECO:0000269" key="40">
    <source>
    </source>
</evidence>
<evidence type="ECO:0000269" key="41">
    <source>
    </source>
</evidence>
<evidence type="ECO:0000269" key="42">
    <source>
    </source>
</evidence>
<evidence type="ECO:0000269" key="43">
    <source>
    </source>
</evidence>
<evidence type="ECO:0000269" key="44">
    <source>
    </source>
</evidence>
<evidence type="ECO:0000269" key="45">
    <source>
    </source>
</evidence>
<evidence type="ECO:0000269" key="46">
    <source>
    </source>
</evidence>
<evidence type="ECO:0000269" key="47">
    <source>
    </source>
</evidence>
<evidence type="ECO:0000269" key="48">
    <source>
    </source>
</evidence>
<evidence type="ECO:0000269" key="49">
    <source>
    </source>
</evidence>
<evidence type="ECO:0000269" key="50">
    <source>
    </source>
</evidence>
<evidence type="ECO:0000269" key="51">
    <source>
    </source>
</evidence>
<evidence type="ECO:0000269" key="52">
    <source>
    </source>
</evidence>
<evidence type="ECO:0000269" key="53">
    <source>
    </source>
</evidence>
<evidence type="ECO:0000269" key="54">
    <source>
    </source>
</evidence>
<evidence type="ECO:0000269" key="55">
    <source>
    </source>
</evidence>
<evidence type="ECO:0000269" key="56">
    <source>
    </source>
</evidence>
<evidence type="ECO:0000269" key="57">
    <source>
    </source>
</evidence>
<evidence type="ECO:0000269" key="58">
    <source>
    </source>
</evidence>
<evidence type="ECO:0000269" key="59">
    <source>
    </source>
</evidence>
<evidence type="ECO:0000269" key="60">
    <source>
    </source>
</evidence>
<evidence type="ECO:0000269" key="61">
    <source>
    </source>
</evidence>
<evidence type="ECO:0000269" key="62">
    <source>
    </source>
</evidence>
<evidence type="ECO:0000303" key="63">
    <source>
    </source>
</evidence>
<evidence type="ECO:0000305" key="64"/>
<gene>
    <name type="primary">CDR1</name>
    <name type="ordered locus">CAALFM_C305220WA</name>
    <name type="ORF">CaO19.13421</name>
    <name type="ORF">CaO19.6000</name>
</gene>
<comment type="function">
    <text evidence="5 6 7 10 11 13 15 18 19 23 28 29 31 33 34 38 39 40 41 42 43 45 46 50 53 54 55 56 57 58 59 62">Pleiotropic ABC efflux transporter that confers resistance to numerous chemicals including anisomycin, cycloheximide, fluconazole, miconazole, ketoconazole, itriconazole, nystatin, terbinafine, amorolfine, brefeldin A, amphotericin B, fluphenazine, as well as estrogen. Plays a role in farnesol-induced apoptotic process through glutathione efflux activity. Mediates in-to-out translocation of membrane phospholipids including aminophospholipids and thus regulates asymmetric distribution of phosphatidylethanolamine. Exhibits nucleoside triphosphatase activity.</text>
</comment>
<comment type="activity regulation">
    <text evidence="21">Disulfiram reverses CDR1-mediated drug resistance by interaction with both ATP and substrate-binding sites of the transporter and may be useful for antifungal therapy.</text>
</comment>
<comment type="biophysicochemical properties">
    <kinetics>
        <KM evidence="46">0.8 uM for fluconazole</KM>
        <Vmax evidence="46">0.91 pmol/min/mg enzyme for fluconazole transport</Vmax>
    </kinetics>
</comment>
<comment type="subcellular location">
    <subcellularLocation>
        <location evidence="15 19 28 33 39 55">Cell membrane</location>
        <topology evidence="1">Multi-pass membrane protein</topology>
    </subcellularLocation>
    <text evidence="39 56">Accumulates at membrane rafts. Both ergosterol and sphingolipids are essential for targeting to membrane rafts. Mislocalizes to the vacuole in absence of FZO1.</text>
</comment>
<comment type="induction">
    <text evidence="7 8 9 12 16 17 20 22 24 25 27 29 30 32 35 36 37 38 40 44 45 47 49 51 52 60 61">The distal promoter mediates the miconazole response whereas the proximal promoter (-345/+1) contains all the regulatory domains required for its induction by various other stresses. The promoter also contains a steroid responsive region (SRR) conferring beta-oestradiol and progesterone inducibility. Transcription is positively regulated by NCB2, NTD80 and TAC1 and repressed by FCR1. Expression is up-regulated during biofilm development, by heat-shock, and by benomyl, doxorubicin, miconazole, vinblastine, adriamycin, fluphenazine, cycloheximide, calcofluor, canavanine, 5'-fluorcytosine, cilofungin and caffeine. Expression is repressed by serum and inhibited by tetrandrine. Transcription is also reduced during in vitro fluconazole exposure but in the postexposure period, the mRNA abundance increases.</text>
</comment>
<comment type="domain">
    <text evidence="14 26 33 48">Contains 2 cytoplasmic nucleotide binding domains (NBDs). The N-terminal NBD has ATPase activity. The 2 NBDs are asymmetric and non-exchangeable and the drug efflux by CDR1 involves complex interactions between the two halves of the protein.</text>
</comment>
<comment type="disruption phenotype">
    <text evidence="30 57">Leads to hypersusceptibility to the antifungal agents terbinafine and amorolfine, and to the metabolic inhibitors cycloheximide, brefeldin A, and fluphenazine. Shows a decreased number of germ tube-forming cells in the presence of estradiol when CDR2 is also deleted.</text>
</comment>
<comment type="similarity">
    <text evidence="3">Belongs to the ABC transporter superfamily.</text>
</comment>
<accession>Q5ANA3</accession>
<accession>A0A1D8PK55</accession>